<gene>
    <name type="primary">Rasa3</name>
</gene>
<protein>
    <recommendedName>
        <fullName>Ras GTPase-activating protein 3</fullName>
    </recommendedName>
    <alternativeName>
        <fullName>GAP1(IP4BP)</fullName>
    </alternativeName>
    <alternativeName>
        <fullName>Ins P4-binding protein</fullName>
    </alternativeName>
    <alternativeName>
        <fullName>R-ras GAP</fullName>
    </alternativeName>
</protein>
<evidence type="ECO:0000250" key="1"/>
<evidence type="ECO:0000250" key="2">
    <source>
        <dbReference type="UniProtKB" id="Q14644"/>
    </source>
</evidence>
<evidence type="ECO:0000250" key="3">
    <source>
        <dbReference type="UniProtKB" id="Q60790"/>
    </source>
</evidence>
<evidence type="ECO:0000255" key="4">
    <source>
        <dbReference type="PROSITE-ProRule" id="PRU00041"/>
    </source>
</evidence>
<evidence type="ECO:0000255" key="5">
    <source>
        <dbReference type="PROSITE-ProRule" id="PRU00145"/>
    </source>
</evidence>
<evidence type="ECO:0000255" key="6">
    <source>
        <dbReference type="PROSITE-ProRule" id="PRU00167"/>
    </source>
</evidence>
<evidence type="ECO:0000255" key="7">
    <source>
        <dbReference type="PROSITE-ProRule" id="PRU00432"/>
    </source>
</evidence>
<evidence type="ECO:0000305" key="8"/>
<evidence type="ECO:0007744" key="9">
    <source>
    </source>
</evidence>
<reference key="1">
    <citation type="submission" date="1996-06" db="EMBL/GenBank/DDBJ databases">
        <title>Essential role of R-ras GAP in embryogenesis: embryonic lethality by underdeveloped adherent junctions between capillary endothelial cells.</title>
        <authorList>
            <person name="Iwashita S."/>
            <person name="Kubo Y."/>
            <person name="Sezaki M."/>
            <person name="Hinohara Y."/>
            <person name="Kobayashi M."/>
            <person name="Satoh S."/>
            <person name="Fukuda M."/>
            <person name="Nakamura K."/>
            <person name="Suzuki-Migishima R."/>
            <person name="Yokoyama M."/>
            <person name="Ohba M."/>
            <person name="Katoh C."/>
            <person name="Adachi E."/>
            <person name="Song S.Y."/>
        </authorList>
    </citation>
    <scope>NUCLEOTIDE SEQUENCE [MRNA]</scope>
    <source>
        <strain>Wistar</strain>
    </source>
</reference>
<reference key="2">
    <citation type="submission" date="1999-06" db="EMBL/GenBank/DDBJ databases">
        <title>Expression of the R-ras GTPase activating protein gene during rat brain development.</title>
        <authorList>
            <person name="Sezaki M."/>
            <person name="Iwashita S."/>
        </authorList>
    </citation>
    <scope>NUCLEOTIDE SEQUENCE [MRNA] OF 711-834</scope>
</reference>
<reference key="3">
    <citation type="journal article" date="2012" name="Nat. Commun.">
        <title>Quantitative maps of protein phosphorylation sites across 14 different rat organs and tissues.</title>
        <authorList>
            <person name="Lundby A."/>
            <person name="Secher A."/>
            <person name="Lage K."/>
            <person name="Nordsborg N.B."/>
            <person name="Dmytriyev A."/>
            <person name="Lundby C."/>
            <person name="Olsen J.V."/>
        </authorList>
    </citation>
    <scope>PHOSPHORYLATION [LARGE SCALE ANALYSIS] AT SER-809 AND SER-833</scope>
    <scope>IDENTIFICATION BY MASS SPECTROMETRY [LARGE SCALE ANALYSIS]</scope>
</reference>
<accession>Q9QYJ2</accession>
<accession>Q09YN9</accession>
<sequence length="834" mass="96020">MAVEEEGLRVFQSVRIKIGEAKNLPSYPGPNKMRDCYCTVNLDQEEVFRTKIVEKSLCPFYGEDFYCEIPRSFRHLSFYIFDRDVFRRDSIIGKVAIQKEDLQRYHNRDTWFQLQHVDADSEVQGKVHLELRLSEVITDTGVVCHKLAARIFECQGLPIVNGQCDPYATVTLAGPFRSEAKKTKVKKKTNNPQFDEVFYFEVTRPCSYSKKSHFDFEEEDVDKLEIRVDLWNASNLKFGDEFLGELRIPLHVLRYASSYEAWYFLQPRDNGSKSVKPDDLGSLRLNVVYTEDHVFSSEYYSPLRDLLLKSADVEPVSASAAHILGEVCRDKQEAAIPLVRLLLHYGRVVPFISAIASAEVKRTQDPNTIFRGNSLTSKCIDETMKLAGMHYLHVTLKPTIEEICQSHKSCEIDPVKLKDGENLENNMESLRQYVDRIFSVITKSGVSCPTVMCDIFFSLREAAAKRFQDDLDVRYTAVSSFIFLRFFAPAILSPNLFQLTPHHTDPQTSRTLTLISKTIQTLGSLSKSKSASFKESYMATFYEFFNEQKYADAVKNFLDLISSSGRRDPKSIEQPILLKEGFMIKRAQGRKRFGMKNFKKRWFRLTNHEFTYQKSKGDQPLCNIPIENILAVERLEEESFRMKNMFQVIQPERALYIQANNCVEAKDWIDILTKVSQCNQKRLTVFHPSAYLNGHWLCCRASSDTAIGCTPCTGGLPANIQLDIDGDRETERIYSLFNLYMGKLEKMQEACGSKSVYDGPEQEEYSTFIIDDPQETYRTLKQVIAGVGTLEQEHAQYRRNKFKKTRYGSQEHPIGDKSFQNYIRQQSEISTHSI</sequence>
<organism>
    <name type="scientific">Rattus norvegicus</name>
    <name type="common">Rat</name>
    <dbReference type="NCBI Taxonomy" id="10116"/>
    <lineage>
        <taxon>Eukaryota</taxon>
        <taxon>Metazoa</taxon>
        <taxon>Chordata</taxon>
        <taxon>Craniata</taxon>
        <taxon>Vertebrata</taxon>
        <taxon>Euteleostomi</taxon>
        <taxon>Mammalia</taxon>
        <taxon>Eutheria</taxon>
        <taxon>Euarchontoglires</taxon>
        <taxon>Glires</taxon>
        <taxon>Rodentia</taxon>
        <taxon>Myomorpha</taxon>
        <taxon>Muroidea</taxon>
        <taxon>Muridae</taxon>
        <taxon>Murinae</taxon>
        <taxon>Rattus</taxon>
    </lineage>
</organism>
<keyword id="KW-0007">Acetylation</keyword>
<keyword id="KW-0343">GTPase activation</keyword>
<keyword id="KW-0479">Metal-binding</keyword>
<keyword id="KW-0597">Phosphoprotein</keyword>
<keyword id="KW-1185">Reference proteome</keyword>
<keyword id="KW-0677">Repeat</keyword>
<keyword id="KW-0862">Zinc</keyword>
<keyword id="KW-0863">Zinc-finger</keyword>
<feature type="initiator methionine" description="Removed" evidence="2">
    <location>
        <position position="1"/>
    </location>
</feature>
<feature type="chain" id="PRO_0000056644" description="Ras GTPase-activating protein 3">
    <location>
        <begin position="2"/>
        <end position="834"/>
    </location>
</feature>
<feature type="domain" description="C2 1" evidence="4">
    <location>
        <begin position="1"/>
        <end position="112"/>
    </location>
</feature>
<feature type="domain" description="C2 2" evidence="4">
    <location>
        <begin position="123"/>
        <end position="263"/>
    </location>
</feature>
<feature type="domain" description="Ras-GAP" evidence="6">
    <location>
        <begin position="346"/>
        <end position="561"/>
    </location>
</feature>
<feature type="domain" description="PH" evidence="5">
    <location>
        <begin position="576"/>
        <end position="677"/>
    </location>
</feature>
<feature type="zinc finger region" description="Btk-type" evidence="7">
    <location>
        <begin position="679"/>
        <end position="715"/>
    </location>
</feature>
<feature type="binding site" evidence="7">
    <location>
        <position position="687"/>
    </location>
    <ligand>
        <name>Zn(2+)</name>
        <dbReference type="ChEBI" id="CHEBI:29105"/>
    </ligand>
</feature>
<feature type="binding site" evidence="7">
    <location>
        <position position="698"/>
    </location>
    <ligand>
        <name>Zn(2+)</name>
        <dbReference type="ChEBI" id="CHEBI:29105"/>
    </ligand>
</feature>
<feature type="binding site" evidence="7">
    <location>
        <position position="699"/>
    </location>
    <ligand>
        <name>Zn(2+)</name>
        <dbReference type="ChEBI" id="CHEBI:29105"/>
    </ligand>
</feature>
<feature type="binding site" evidence="7">
    <location>
        <position position="709"/>
    </location>
    <ligand>
        <name>Zn(2+)</name>
        <dbReference type="ChEBI" id="CHEBI:29105"/>
    </ligand>
</feature>
<feature type="site" description="Arginine finger; crucial for GTP hydrolysis by stabilizing the transition state" evidence="6">
    <location>
        <position position="371"/>
    </location>
</feature>
<feature type="modified residue" description="N-acetylalanine" evidence="2">
    <location>
        <position position="2"/>
    </location>
</feature>
<feature type="modified residue" description="Phosphotyrosine" evidence="3">
    <location>
        <position position="66"/>
    </location>
</feature>
<feature type="modified residue" description="Phosphoserine" evidence="3">
    <location>
        <position position="77"/>
    </location>
</feature>
<feature type="modified residue" description="Phosphothreonine" evidence="2">
    <location>
        <position position="110"/>
    </location>
</feature>
<feature type="modified residue" description="Phosphoserine" evidence="9">
    <location>
        <position position="809"/>
    </location>
</feature>
<feature type="modified residue" description="Phosphoserine" evidence="9">
    <location>
        <position position="833"/>
    </location>
</feature>
<feature type="sequence conflict" description="In Ref. 2; BAA89032." evidence="8" ref="2">
    <original>R</original>
    <variation>K</variation>
    <location>
        <position position="778"/>
    </location>
</feature>
<comment type="function">
    <text evidence="1">Inhibitory regulator of the Ras-cyclic AMP pathway. Binds inositol tetrakisphosphate (IP4) (By similarity).</text>
</comment>
<name>RASA3_RAT</name>
<proteinExistence type="evidence at protein level"/>
<dbReference type="EMBL" id="D86045">
    <property type="protein sequence ID" value="BAF31891.1"/>
    <property type="molecule type" value="mRNA"/>
</dbReference>
<dbReference type="EMBL" id="AB028626">
    <property type="protein sequence ID" value="BAA89032.1"/>
    <property type="molecule type" value="mRNA"/>
</dbReference>
<dbReference type="RefSeq" id="NP_113762.1">
    <property type="nucleotide sequence ID" value="NM_031574.1"/>
</dbReference>
<dbReference type="SMR" id="Q9QYJ2"/>
<dbReference type="BioGRID" id="248025">
    <property type="interactions" value="2"/>
</dbReference>
<dbReference type="FunCoup" id="Q9QYJ2">
    <property type="interactions" value="1735"/>
</dbReference>
<dbReference type="STRING" id="10116.ENSRNOP00000069783"/>
<dbReference type="GlyGen" id="Q9QYJ2">
    <property type="glycosylation" value="1 site"/>
</dbReference>
<dbReference type="iPTMnet" id="Q9QYJ2"/>
<dbReference type="PhosphoSitePlus" id="Q9QYJ2"/>
<dbReference type="PaxDb" id="10116-ENSRNOP00000061587"/>
<dbReference type="GeneID" id="29372"/>
<dbReference type="KEGG" id="rno:29372"/>
<dbReference type="AGR" id="RGD:69365"/>
<dbReference type="CTD" id="22821"/>
<dbReference type="RGD" id="69365">
    <property type="gene designation" value="Rasa3"/>
</dbReference>
<dbReference type="eggNOG" id="KOG2059">
    <property type="taxonomic scope" value="Eukaryota"/>
</dbReference>
<dbReference type="InParanoid" id="Q9QYJ2"/>
<dbReference type="OrthoDB" id="7726at9989"/>
<dbReference type="PhylomeDB" id="Q9QYJ2"/>
<dbReference type="Reactome" id="R-RNO-5658442">
    <property type="pathway name" value="Regulation of RAS by GAPs"/>
</dbReference>
<dbReference type="PRO" id="PR:Q9QYJ2"/>
<dbReference type="Proteomes" id="UP000002494">
    <property type="component" value="Unplaced"/>
</dbReference>
<dbReference type="GO" id="GO:0009898">
    <property type="term" value="C:cytoplasmic side of plasma membrane"/>
    <property type="evidence" value="ECO:0000266"/>
    <property type="project" value="RGD"/>
</dbReference>
<dbReference type="GO" id="GO:0005246">
    <property type="term" value="F:calcium channel regulator activity"/>
    <property type="evidence" value="ECO:0000266"/>
    <property type="project" value="RGD"/>
</dbReference>
<dbReference type="GO" id="GO:0005096">
    <property type="term" value="F:GTPase activator activity"/>
    <property type="evidence" value="ECO:0007669"/>
    <property type="project" value="UniProtKB-KW"/>
</dbReference>
<dbReference type="GO" id="GO:0008270">
    <property type="term" value="F:zinc ion binding"/>
    <property type="evidence" value="ECO:0007669"/>
    <property type="project" value="UniProtKB-KW"/>
</dbReference>
<dbReference type="GO" id="GO:0034605">
    <property type="term" value="P:cellular response to heat"/>
    <property type="evidence" value="ECO:0000314"/>
    <property type="project" value="MGI"/>
</dbReference>
<dbReference type="GO" id="GO:0035556">
    <property type="term" value="P:intracellular signal transduction"/>
    <property type="evidence" value="ECO:0007669"/>
    <property type="project" value="InterPro"/>
</dbReference>
<dbReference type="GO" id="GO:0046580">
    <property type="term" value="P:negative regulation of Ras protein signal transduction"/>
    <property type="evidence" value="ECO:0007669"/>
    <property type="project" value="InterPro"/>
</dbReference>
<dbReference type="GO" id="GO:0030168">
    <property type="term" value="P:platelet activation"/>
    <property type="evidence" value="ECO:0000266"/>
    <property type="project" value="RGD"/>
</dbReference>
<dbReference type="CDD" id="cd08401">
    <property type="entry name" value="C2A_RasA2_RasA3"/>
    <property type="match status" value="1"/>
</dbReference>
<dbReference type="CDD" id="cd04010">
    <property type="entry name" value="C2B_RasA3"/>
    <property type="match status" value="1"/>
</dbReference>
<dbReference type="CDD" id="cd13371">
    <property type="entry name" value="PH_GAP1_mammal-like"/>
    <property type="match status" value="1"/>
</dbReference>
<dbReference type="CDD" id="cd05134">
    <property type="entry name" value="RasGAP_RASA3"/>
    <property type="match status" value="1"/>
</dbReference>
<dbReference type="FunFam" id="1.10.506.10:FF:000011">
    <property type="entry name" value="Ras GTPase-activating protein 2 isoform 3"/>
    <property type="match status" value="1"/>
</dbReference>
<dbReference type="FunFam" id="2.30.29.30:FF:000144">
    <property type="entry name" value="Ras GTPase-activating protein 2 isoform 3"/>
    <property type="match status" value="1"/>
</dbReference>
<dbReference type="FunFam" id="2.60.40.150:FF:000086">
    <property type="entry name" value="Ras GTPase-activating protein 2 isoform 3"/>
    <property type="match status" value="1"/>
</dbReference>
<dbReference type="FunFam" id="2.60.40.150:FF:000144">
    <property type="entry name" value="RAS p21 protein activator 3"/>
    <property type="match status" value="1"/>
</dbReference>
<dbReference type="Gene3D" id="2.60.40.150">
    <property type="entry name" value="C2 domain"/>
    <property type="match status" value="2"/>
</dbReference>
<dbReference type="Gene3D" id="1.10.506.10">
    <property type="entry name" value="GTPase Activation - p120gap, domain 1"/>
    <property type="match status" value="2"/>
</dbReference>
<dbReference type="Gene3D" id="2.30.29.30">
    <property type="entry name" value="Pleckstrin-homology domain (PH domain)/Phosphotyrosine-binding domain (PTB)"/>
    <property type="match status" value="1"/>
</dbReference>
<dbReference type="InterPro" id="IPR000008">
    <property type="entry name" value="C2_dom"/>
</dbReference>
<dbReference type="InterPro" id="IPR035892">
    <property type="entry name" value="C2_domain_sf"/>
</dbReference>
<dbReference type="InterPro" id="IPR011993">
    <property type="entry name" value="PH-like_dom_sf"/>
</dbReference>
<dbReference type="InterPro" id="IPR001849">
    <property type="entry name" value="PH_domain"/>
</dbReference>
<dbReference type="InterPro" id="IPR039360">
    <property type="entry name" value="Ras_GTPase"/>
</dbReference>
<dbReference type="InterPro" id="IPR037774">
    <property type="entry name" value="RASA3_PH"/>
</dbReference>
<dbReference type="InterPro" id="IPR023152">
    <property type="entry name" value="RasGAP_CS"/>
</dbReference>
<dbReference type="InterPro" id="IPR001936">
    <property type="entry name" value="RasGAP_dom"/>
</dbReference>
<dbReference type="InterPro" id="IPR008936">
    <property type="entry name" value="Rho_GTPase_activation_prot"/>
</dbReference>
<dbReference type="InterPro" id="IPR001562">
    <property type="entry name" value="Znf_Btk_motif"/>
</dbReference>
<dbReference type="PANTHER" id="PTHR10194:SF53">
    <property type="entry name" value="RAS GTPASE-ACTIVATING PROTEIN 3"/>
    <property type="match status" value="1"/>
</dbReference>
<dbReference type="PANTHER" id="PTHR10194">
    <property type="entry name" value="RAS GTPASE-ACTIVATING PROTEINS"/>
    <property type="match status" value="1"/>
</dbReference>
<dbReference type="Pfam" id="PF00779">
    <property type="entry name" value="BTK"/>
    <property type="match status" value="1"/>
</dbReference>
<dbReference type="Pfam" id="PF00168">
    <property type="entry name" value="C2"/>
    <property type="match status" value="2"/>
</dbReference>
<dbReference type="Pfam" id="PF00169">
    <property type="entry name" value="PH"/>
    <property type="match status" value="1"/>
</dbReference>
<dbReference type="Pfam" id="PF00616">
    <property type="entry name" value="RasGAP"/>
    <property type="match status" value="2"/>
</dbReference>
<dbReference type="SMART" id="SM00107">
    <property type="entry name" value="BTK"/>
    <property type="match status" value="1"/>
</dbReference>
<dbReference type="SMART" id="SM00239">
    <property type="entry name" value="C2"/>
    <property type="match status" value="2"/>
</dbReference>
<dbReference type="SMART" id="SM00233">
    <property type="entry name" value="PH"/>
    <property type="match status" value="1"/>
</dbReference>
<dbReference type="SMART" id="SM00323">
    <property type="entry name" value="RasGAP"/>
    <property type="match status" value="1"/>
</dbReference>
<dbReference type="SUPFAM" id="SSF49562">
    <property type="entry name" value="C2 domain (Calcium/lipid-binding domain, CaLB)"/>
    <property type="match status" value="2"/>
</dbReference>
<dbReference type="SUPFAM" id="SSF48350">
    <property type="entry name" value="GTPase activation domain, GAP"/>
    <property type="match status" value="1"/>
</dbReference>
<dbReference type="SUPFAM" id="SSF50729">
    <property type="entry name" value="PH domain-like"/>
    <property type="match status" value="1"/>
</dbReference>
<dbReference type="PROSITE" id="PS50004">
    <property type="entry name" value="C2"/>
    <property type="match status" value="2"/>
</dbReference>
<dbReference type="PROSITE" id="PS50003">
    <property type="entry name" value="PH_DOMAIN"/>
    <property type="match status" value="1"/>
</dbReference>
<dbReference type="PROSITE" id="PS00509">
    <property type="entry name" value="RAS_GTPASE_ACTIV_1"/>
    <property type="match status" value="1"/>
</dbReference>
<dbReference type="PROSITE" id="PS50018">
    <property type="entry name" value="RAS_GTPASE_ACTIV_2"/>
    <property type="match status" value="1"/>
</dbReference>
<dbReference type="PROSITE" id="PS51113">
    <property type="entry name" value="ZF_BTK"/>
    <property type="match status" value="1"/>
</dbReference>